<dbReference type="EC" id="2.7.7.23" evidence="1"/>
<dbReference type="EC" id="2.3.1.157" evidence="1"/>
<dbReference type="EMBL" id="CP000100">
    <property type="protein sequence ID" value="ABB56320.1"/>
    <property type="molecule type" value="Genomic_DNA"/>
</dbReference>
<dbReference type="RefSeq" id="WP_011243536.1">
    <property type="nucleotide sequence ID" value="NZ_JACJTX010000002.1"/>
</dbReference>
<dbReference type="SMR" id="Q31RJ9"/>
<dbReference type="STRING" id="1140.Synpcc7942_0288"/>
<dbReference type="PaxDb" id="1140-Synpcc7942_0288"/>
<dbReference type="GeneID" id="72429103"/>
<dbReference type="KEGG" id="syf:Synpcc7942_0288"/>
<dbReference type="eggNOG" id="COG1207">
    <property type="taxonomic scope" value="Bacteria"/>
</dbReference>
<dbReference type="HOGENOM" id="CLU_029499_15_2_3"/>
<dbReference type="OrthoDB" id="9775031at2"/>
<dbReference type="BioCyc" id="SYNEL:SYNPCC7942_0288-MONOMER"/>
<dbReference type="UniPathway" id="UPA00113">
    <property type="reaction ID" value="UER00532"/>
</dbReference>
<dbReference type="UniPathway" id="UPA00113">
    <property type="reaction ID" value="UER00533"/>
</dbReference>
<dbReference type="UniPathway" id="UPA00973"/>
<dbReference type="Proteomes" id="UP000889800">
    <property type="component" value="Chromosome"/>
</dbReference>
<dbReference type="GO" id="GO:0031470">
    <property type="term" value="C:carboxysome"/>
    <property type="evidence" value="ECO:0007669"/>
    <property type="project" value="UniProtKB-ARBA"/>
</dbReference>
<dbReference type="GO" id="GO:0005737">
    <property type="term" value="C:cytoplasm"/>
    <property type="evidence" value="ECO:0007669"/>
    <property type="project" value="UniProtKB-SubCell"/>
</dbReference>
<dbReference type="GO" id="GO:0016020">
    <property type="term" value="C:membrane"/>
    <property type="evidence" value="ECO:0007669"/>
    <property type="project" value="GOC"/>
</dbReference>
<dbReference type="GO" id="GO:0019134">
    <property type="term" value="F:glucosamine-1-phosphate N-acetyltransferase activity"/>
    <property type="evidence" value="ECO:0007669"/>
    <property type="project" value="UniProtKB-UniRule"/>
</dbReference>
<dbReference type="GO" id="GO:0000287">
    <property type="term" value="F:magnesium ion binding"/>
    <property type="evidence" value="ECO:0007669"/>
    <property type="project" value="UniProtKB-UniRule"/>
</dbReference>
<dbReference type="GO" id="GO:0043886">
    <property type="term" value="F:structural constituent of carboxysome shell"/>
    <property type="evidence" value="ECO:0007669"/>
    <property type="project" value="UniProtKB-ARBA"/>
</dbReference>
<dbReference type="GO" id="GO:0003977">
    <property type="term" value="F:UDP-N-acetylglucosamine diphosphorylase activity"/>
    <property type="evidence" value="ECO:0007669"/>
    <property type="project" value="UniProtKB-UniRule"/>
</dbReference>
<dbReference type="GO" id="GO:0000902">
    <property type="term" value="P:cell morphogenesis"/>
    <property type="evidence" value="ECO:0007669"/>
    <property type="project" value="UniProtKB-UniRule"/>
</dbReference>
<dbReference type="GO" id="GO:0071555">
    <property type="term" value="P:cell wall organization"/>
    <property type="evidence" value="ECO:0007669"/>
    <property type="project" value="UniProtKB-KW"/>
</dbReference>
<dbReference type="GO" id="GO:0009245">
    <property type="term" value="P:lipid A biosynthetic process"/>
    <property type="evidence" value="ECO:0007669"/>
    <property type="project" value="UniProtKB-UniRule"/>
</dbReference>
<dbReference type="GO" id="GO:0009252">
    <property type="term" value="P:peptidoglycan biosynthetic process"/>
    <property type="evidence" value="ECO:0007669"/>
    <property type="project" value="UniProtKB-UniRule"/>
</dbReference>
<dbReference type="GO" id="GO:0008360">
    <property type="term" value="P:regulation of cell shape"/>
    <property type="evidence" value="ECO:0007669"/>
    <property type="project" value="UniProtKB-KW"/>
</dbReference>
<dbReference type="GO" id="GO:0006048">
    <property type="term" value="P:UDP-N-acetylglucosamine biosynthetic process"/>
    <property type="evidence" value="ECO:0007669"/>
    <property type="project" value="UniProtKB-UniPathway"/>
</dbReference>
<dbReference type="CDD" id="cd02540">
    <property type="entry name" value="GT2_GlmU_N_bac"/>
    <property type="match status" value="1"/>
</dbReference>
<dbReference type="CDD" id="cd03353">
    <property type="entry name" value="LbH_GlmU_C"/>
    <property type="match status" value="1"/>
</dbReference>
<dbReference type="Gene3D" id="2.160.10.10">
    <property type="entry name" value="Hexapeptide repeat proteins"/>
    <property type="match status" value="1"/>
</dbReference>
<dbReference type="Gene3D" id="3.90.550.10">
    <property type="entry name" value="Spore Coat Polysaccharide Biosynthesis Protein SpsA, Chain A"/>
    <property type="match status" value="1"/>
</dbReference>
<dbReference type="HAMAP" id="MF_01631">
    <property type="entry name" value="GlmU"/>
    <property type="match status" value="1"/>
</dbReference>
<dbReference type="InterPro" id="IPR005882">
    <property type="entry name" value="Bifunctional_GlmU"/>
</dbReference>
<dbReference type="InterPro" id="IPR050065">
    <property type="entry name" value="GlmU-like"/>
</dbReference>
<dbReference type="InterPro" id="IPR038009">
    <property type="entry name" value="GlmU_C_LbH"/>
</dbReference>
<dbReference type="InterPro" id="IPR001451">
    <property type="entry name" value="Hexapep"/>
</dbReference>
<dbReference type="InterPro" id="IPR025877">
    <property type="entry name" value="MobA-like_NTP_Trfase"/>
</dbReference>
<dbReference type="InterPro" id="IPR029044">
    <property type="entry name" value="Nucleotide-diphossugar_trans"/>
</dbReference>
<dbReference type="InterPro" id="IPR011004">
    <property type="entry name" value="Trimer_LpxA-like_sf"/>
</dbReference>
<dbReference type="NCBIfam" id="TIGR01173">
    <property type="entry name" value="glmU"/>
    <property type="match status" value="1"/>
</dbReference>
<dbReference type="NCBIfam" id="NF010940">
    <property type="entry name" value="PRK14360.1"/>
    <property type="match status" value="1"/>
</dbReference>
<dbReference type="PANTHER" id="PTHR43584:SF3">
    <property type="entry name" value="BIFUNCTIONAL PROTEIN GLMU"/>
    <property type="match status" value="1"/>
</dbReference>
<dbReference type="PANTHER" id="PTHR43584">
    <property type="entry name" value="NUCLEOTIDYL TRANSFERASE"/>
    <property type="match status" value="1"/>
</dbReference>
<dbReference type="Pfam" id="PF00132">
    <property type="entry name" value="Hexapep"/>
    <property type="match status" value="3"/>
</dbReference>
<dbReference type="Pfam" id="PF12804">
    <property type="entry name" value="NTP_transf_3"/>
    <property type="match status" value="1"/>
</dbReference>
<dbReference type="SUPFAM" id="SSF53448">
    <property type="entry name" value="Nucleotide-diphospho-sugar transferases"/>
    <property type="match status" value="1"/>
</dbReference>
<dbReference type="SUPFAM" id="SSF51161">
    <property type="entry name" value="Trimeric LpxA-like enzymes"/>
    <property type="match status" value="1"/>
</dbReference>
<accession>Q31RJ9</accession>
<feature type="chain" id="PRO_0000244316" description="Bifunctional protein GlmU">
    <location>
        <begin position="1"/>
        <end position="452"/>
    </location>
</feature>
<feature type="region of interest" description="Pyrophosphorylase" evidence="1">
    <location>
        <begin position="1"/>
        <end position="226"/>
    </location>
</feature>
<feature type="region of interest" description="Linker" evidence="1">
    <location>
        <begin position="227"/>
        <end position="247"/>
    </location>
</feature>
<feature type="region of interest" description="N-acetyltransferase" evidence="1">
    <location>
        <begin position="248"/>
        <end position="452"/>
    </location>
</feature>
<feature type="active site" description="Proton acceptor" evidence="1">
    <location>
        <position position="359"/>
    </location>
</feature>
<feature type="binding site" evidence="1">
    <location>
        <begin position="7"/>
        <end position="10"/>
    </location>
    <ligand>
        <name>UDP-N-acetyl-alpha-D-glucosamine</name>
        <dbReference type="ChEBI" id="CHEBI:57705"/>
    </ligand>
</feature>
<feature type="binding site" evidence="1">
    <location>
        <position position="21"/>
    </location>
    <ligand>
        <name>UDP-N-acetyl-alpha-D-glucosamine</name>
        <dbReference type="ChEBI" id="CHEBI:57705"/>
    </ligand>
</feature>
<feature type="binding site" evidence="1">
    <location>
        <position position="73"/>
    </location>
    <ligand>
        <name>UDP-N-acetyl-alpha-D-glucosamine</name>
        <dbReference type="ChEBI" id="CHEBI:57705"/>
    </ligand>
</feature>
<feature type="binding site" evidence="1">
    <location>
        <begin position="78"/>
        <end position="79"/>
    </location>
    <ligand>
        <name>UDP-N-acetyl-alpha-D-glucosamine</name>
        <dbReference type="ChEBI" id="CHEBI:57705"/>
    </ligand>
</feature>
<feature type="binding site" evidence="1">
    <location>
        <position position="103"/>
    </location>
    <ligand>
        <name>Mg(2+)</name>
        <dbReference type="ChEBI" id="CHEBI:18420"/>
    </ligand>
</feature>
<feature type="binding site" evidence="1">
    <location>
        <position position="140"/>
    </location>
    <ligand>
        <name>UDP-N-acetyl-alpha-D-glucosamine</name>
        <dbReference type="ChEBI" id="CHEBI:57705"/>
    </ligand>
</feature>
<feature type="binding site" evidence="1">
    <location>
        <position position="155"/>
    </location>
    <ligand>
        <name>UDP-N-acetyl-alpha-D-glucosamine</name>
        <dbReference type="ChEBI" id="CHEBI:57705"/>
    </ligand>
</feature>
<feature type="binding site" evidence="1">
    <location>
        <position position="170"/>
    </location>
    <ligand>
        <name>UDP-N-acetyl-alpha-D-glucosamine</name>
        <dbReference type="ChEBI" id="CHEBI:57705"/>
    </ligand>
</feature>
<feature type="binding site" evidence="1">
    <location>
        <position position="224"/>
    </location>
    <ligand>
        <name>Mg(2+)</name>
        <dbReference type="ChEBI" id="CHEBI:18420"/>
    </ligand>
</feature>
<feature type="binding site" evidence="1">
    <location>
        <position position="224"/>
    </location>
    <ligand>
        <name>UDP-N-acetyl-alpha-D-glucosamine</name>
        <dbReference type="ChEBI" id="CHEBI:57705"/>
    </ligand>
</feature>
<feature type="binding site" evidence="1">
    <location>
        <position position="329"/>
    </location>
    <ligand>
        <name>UDP-N-acetyl-alpha-D-glucosamine</name>
        <dbReference type="ChEBI" id="CHEBI:57705"/>
    </ligand>
</feature>
<feature type="binding site" evidence="1">
    <location>
        <position position="347"/>
    </location>
    <ligand>
        <name>UDP-N-acetyl-alpha-D-glucosamine</name>
        <dbReference type="ChEBI" id="CHEBI:57705"/>
    </ligand>
</feature>
<feature type="binding site" evidence="1">
    <location>
        <position position="362"/>
    </location>
    <ligand>
        <name>UDP-N-acetyl-alpha-D-glucosamine</name>
        <dbReference type="ChEBI" id="CHEBI:57705"/>
    </ligand>
</feature>
<feature type="binding site" evidence="1">
    <location>
        <position position="373"/>
    </location>
    <ligand>
        <name>UDP-N-acetyl-alpha-D-glucosamine</name>
        <dbReference type="ChEBI" id="CHEBI:57705"/>
    </ligand>
</feature>
<feature type="binding site" evidence="1">
    <location>
        <position position="376"/>
    </location>
    <ligand>
        <name>acetyl-CoA</name>
        <dbReference type="ChEBI" id="CHEBI:57288"/>
    </ligand>
</feature>
<feature type="binding site" evidence="1">
    <location>
        <begin position="382"/>
        <end position="383"/>
    </location>
    <ligand>
        <name>acetyl-CoA</name>
        <dbReference type="ChEBI" id="CHEBI:57288"/>
    </ligand>
</feature>
<feature type="binding site" evidence="1">
    <location>
        <position position="419"/>
    </location>
    <ligand>
        <name>acetyl-CoA</name>
        <dbReference type="ChEBI" id="CHEBI:57288"/>
    </ligand>
</feature>
<feature type="binding site" evidence="1">
    <location>
        <position position="436"/>
    </location>
    <ligand>
        <name>acetyl-CoA</name>
        <dbReference type="ChEBI" id="CHEBI:57288"/>
    </ligand>
</feature>
<name>GLMU_SYNE7</name>
<proteinExistence type="inferred from homology"/>
<organism>
    <name type="scientific">Synechococcus elongatus (strain ATCC 33912 / PCC 7942 / FACHB-805)</name>
    <name type="common">Anacystis nidulans R2</name>
    <dbReference type="NCBI Taxonomy" id="1140"/>
    <lineage>
        <taxon>Bacteria</taxon>
        <taxon>Bacillati</taxon>
        <taxon>Cyanobacteriota</taxon>
        <taxon>Cyanophyceae</taxon>
        <taxon>Synechococcales</taxon>
        <taxon>Synechococcaceae</taxon>
        <taxon>Synechococcus</taxon>
    </lineage>
</organism>
<comment type="function">
    <text evidence="1">Catalyzes the last two sequential reactions in the de novo biosynthetic pathway for UDP-N-acetylglucosamine (UDP-GlcNAc). The C-terminal domain catalyzes the transfer of acetyl group from acetyl coenzyme A to glucosamine-1-phosphate (GlcN-1-P) to produce N-acetylglucosamine-1-phosphate (GlcNAc-1-P), which is converted into UDP-GlcNAc by the transfer of uridine 5-monophosphate (from uridine 5-triphosphate), a reaction catalyzed by the N-terminal domain.</text>
</comment>
<comment type="catalytic activity">
    <reaction evidence="1">
        <text>alpha-D-glucosamine 1-phosphate + acetyl-CoA = N-acetyl-alpha-D-glucosamine 1-phosphate + CoA + H(+)</text>
        <dbReference type="Rhea" id="RHEA:13725"/>
        <dbReference type="ChEBI" id="CHEBI:15378"/>
        <dbReference type="ChEBI" id="CHEBI:57287"/>
        <dbReference type="ChEBI" id="CHEBI:57288"/>
        <dbReference type="ChEBI" id="CHEBI:57776"/>
        <dbReference type="ChEBI" id="CHEBI:58516"/>
        <dbReference type="EC" id="2.3.1.157"/>
    </reaction>
</comment>
<comment type="catalytic activity">
    <reaction evidence="1">
        <text>N-acetyl-alpha-D-glucosamine 1-phosphate + UTP + H(+) = UDP-N-acetyl-alpha-D-glucosamine + diphosphate</text>
        <dbReference type="Rhea" id="RHEA:13509"/>
        <dbReference type="ChEBI" id="CHEBI:15378"/>
        <dbReference type="ChEBI" id="CHEBI:33019"/>
        <dbReference type="ChEBI" id="CHEBI:46398"/>
        <dbReference type="ChEBI" id="CHEBI:57705"/>
        <dbReference type="ChEBI" id="CHEBI:57776"/>
        <dbReference type="EC" id="2.7.7.23"/>
    </reaction>
</comment>
<comment type="cofactor">
    <cofactor evidence="1">
        <name>Mg(2+)</name>
        <dbReference type="ChEBI" id="CHEBI:18420"/>
    </cofactor>
    <text evidence="1">Binds 1 Mg(2+) ion per subunit.</text>
</comment>
<comment type="pathway">
    <text evidence="1">Nucleotide-sugar biosynthesis; UDP-N-acetyl-alpha-D-glucosamine biosynthesis; N-acetyl-alpha-D-glucosamine 1-phosphate from alpha-D-glucosamine 6-phosphate (route II): step 2/2.</text>
</comment>
<comment type="pathway">
    <text evidence="1">Nucleotide-sugar biosynthesis; UDP-N-acetyl-alpha-D-glucosamine biosynthesis; UDP-N-acetyl-alpha-D-glucosamine from N-acetyl-alpha-D-glucosamine 1-phosphate: step 1/1.</text>
</comment>
<comment type="pathway">
    <text evidence="1">Bacterial outer membrane biogenesis; LPS lipid A biosynthesis.</text>
</comment>
<comment type="subunit">
    <text evidence="1">Homotrimer.</text>
</comment>
<comment type="subcellular location">
    <subcellularLocation>
        <location evidence="1">Cytoplasm</location>
    </subcellularLocation>
</comment>
<comment type="similarity">
    <text evidence="1">In the N-terminal section; belongs to the N-acetylglucosamine-1-phosphate uridyltransferase family.</text>
</comment>
<comment type="similarity">
    <text evidence="1">In the C-terminal section; belongs to the transferase hexapeptide repeat family.</text>
</comment>
<sequence>MVAVAILAAGKGTRMKSQLPKVLHRLGSQTLLDRVLASLTPLNVDRCFVIVGYQGDRVRESWAHRTDIEFVEQTQQLGTGHAVQQLLPHLKGYQGDLLVLNGDVPLLRGETLEALVSGHQRSGAAATLLTAQLNQPKGYGRVFCDATSRVCEIIEDRDCTPAQRQNPRVNAGVYCFRWPDLEAVLPNLSTANDQQEYYLTEAITYLDPVSAVEVADSQEILGINDRLQLADSFRILQERIRQQWMLAGVTLVDPTSITIDETVQLGTDVVIEPQTHLRGNTVIGNNCSIGPNSLITNSQIGDGVTVQMSVISDSTIAANSKIGPFAHLRGAAAIGEACRIGNFVEVKKSTVGDRTNVAHLSYLGDATLGQRVNVGAGTITANYDGVSKHPTVIGDRSKTGANSVLVAPVTIGQDVTIAAGSTINKDVPDGALAIARSRQTIHENWSTPTTEQ</sequence>
<evidence type="ECO:0000255" key="1">
    <source>
        <dbReference type="HAMAP-Rule" id="MF_01631"/>
    </source>
</evidence>
<keyword id="KW-0012">Acyltransferase</keyword>
<keyword id="KW-0133">Cell shape</keyword>
<keyword id="KW-0961">Cell wall biogenesis/degradation</keyword>
<keyword id="KW-0963">Cytoplasm</keyword>
<keyword id="KW-0460">Magnesium</keyword>
<keyword id="KW-0479">Metal-binding</keyword>
<keyword id="KW-0511">Multifunctional enzyme</keyword>
<keyword id="KW-0548">Nucleotidyltransferase</keyword>
<keyword id="KW-0573">Peptidoglycan synthesis</keyword>
<keyword id="KW-1185">Reference proteome</keyword>
<keyword id="KW-0677">Repeat</keyword>
<keyword id="KW-0808">Transferase</keyword>
<protein>
    <recommendedName>
        <fullName evidence="1">Bifunctional protein GlmU</fullName>
    </recommendedName>
    <domain>
        <recommendedName>
            <fullName evidence="1">UDP-N-acetylglucosamine pyrophosphorylase</fullName>
            <ecNumber evidence="1">2.7.7.23</ecNumber>
        </recommendedName>
        <alternativeName>
            <fullName evidence="1">N-acetylglucosamine-1-phosphate uridyltransferase</fullName>
        </alternativeName>
    </domain>
    <domain>
        <recommendedName>
            <fullName evidence="1">Glucosamine-1-phosphate N-acetyltransferase</fullName>
            <ecNumber evidence="1">2.3.1.157</ecNumber>
        </recommendedName>
    </domain>
</protein>
<gene>
    <name evidence="1" type="primary">glmU</name>
    <name type="ordered locus">Synpcc7942_0288</name>
</gene>
<reference key="1">
    <citation type="submission" date="2005-08" db="EMBL/GenBank/DDBJ databases">
        <title>Complete sequence of chromosome 1 of Synechococcus elongatus PCC 7942.</title>
        <authorList>
            <consortium name="US DOE Joint Genome Institute"/>
            <person name="Copeland A."/>
            <person name="Lucas S."/>
            <person name="Lapidus A."/>
            <person name="Barry K."/>
            <person name="Detter J.C."/>
            <person name="Glavina T."/>
            <person name="Hammon N."/>
            <person name="Israni S."/>
            <person name="Pitluck S."/>
            <person name="Schmutz J."/>
            <person name="Larimer F."/>
            <person name="Land M."/>
            <person name="Kyrpides N."/>
            <person name="Lykidis A."/>
            <person name="Golden S."/>
            <person name="Richardson P."/>
        </authorList>
    </citation>
    <scope>NUCLEOTIDE SEQUENCE [LARGE SCALE GENOMIC DNA]</scope>
    <source>
        <strain>ATCC 33912 / PCC 7942 / FACHB-805</strain>
    </source>
</reference>